<name>NSP2_ROTH6</name>
<evidence type="ECO:0000255" key="1">
    <source>
        <dbReference type="HAMAP-Rule" id="MF_04089"/>
    </source>
</evidence>
<organism>
    <name type="scientific">Rotavirus A (strain RVA/Human/Indonesia/69M/1980/G8P4[10])</name>
    <name type="common">RV-A</name>
    <dbReference type="NCBI Taxonomy" id="10947"/>
    <lineage>
        <taxon>Viruses</taxon>
        <taxon>Riboviria</taxon>
        <taxon>Orthornavirae</taxon>
        <taxon>Duplornaviricota</taxon>
        <taxon>Resentoviricetes</taxon>
        <taxon>Reovirales</taxon>
        <taxon>Sedoreoviridae</taxon>
        <taxon>Rotavirus</taxon>
        <taxon>Rotavirus A</taxon>
    </lineage>
</organism>
<feature type="chain" id="PRO_0000369534" description="Non-structural protein 2">
    <location>
        <begin position="1"/>
        <end position="317"/>
    </location>
</feature>
<feature type="region of interest" description="RNA-binding" evidence="1">
    <location>
        <begin position="205"/>
        <end position="241"/>
    </location>
</feature>
<feature type="active site" description="For NTPase and RTPase activities" evidence="1">
    <location>
        <position position="225"/>
    </location>
</feature>
<feature type="binding site" evidence="1">
    <location>
        <begin position="107"/>
        <end position="109"/>
    </location>
    <ligand>
        <name>ATP</name>
        <dbReference type="ChEBI" id="CHEBI:30616"/>
    </ligand>
</feature>
<feature type="binding site" evidence="1">
    <location>
        <position position="188"/>
    </location>
    <ligand>
        <name>ATP</name>
        <dbReference type="ChEBI" id="CHEBI:30616"/>
    </ligand>
</feature>
<feature type="binding site" evidence="1">
    <location>
        <begin position="221"/>
        <end position="223"/>
    </location>
    <ligand>
        <name>ATP</name>
        <dbReference type="ChEBI" id="CHEBI:30616"/>
    </ligand>
</feature>
<feature type="binding site" evidence="1">
    <location>
        <position position="227"/>
    </location>
    <ligand>
        <name>ATP</name>
        <dbReference type="ChEBI" id="CHEBI:30616"/>
    </ligand>
</feature>
<keyword id="KW-0067">ATP-binding</keyword>
<keyword id="KW-1035">Host cytoplasm</keyword>
<keyword id="KW-0378">Hydrolase</keyword>
<keyword id="KW-0460">Magnesium</keyword>
<keyword id="KW-0479">Metal-binding</keyword>
<keyword id="KW-0547">Nucleotide-binding</keyword>
<keyword id="KW-0694">RNA-binding</keyword>
<organismHost>
    <name type="scientific">Homo sapiens</name>
    <name type="common">Human</name>
    <dbReference type="NCBI Taxonomy" id="9606"/>
</organismHost>
<proteinExistence type="inferred from homology"/>
<sequence>MAELACFCYPHLENDSYKFIPFNSLAIKCMLTAKVDKKDQDKFYNSIIYGIAPPPQFKKRYNTNDNSRGMNYETSMFNKVAMLVCEALNSIKVTQSDVASVLSKVVSVRHLENLVLRRENHQDVLFHSKELLLKSVLIAVGHSKEIETTATAEGGEIVFQNAAFTMWRLTYLEHKLMPILDQNFIEYKITVNEDKPVLESHVKELIAELRWQYNKFAVITHGKGHYRVVKYSSVANHADRVYATFKSNNKNGNMLEFNLLDQRIIWQNWYAFTSSMKQGNTLDVCKRLLFQKMKRESNPFKGLSTDRKMDEVSQVGI</sequence>
<reference key="1">
    <citation type="journal article" date="2008" name="J. Virol.">
        <title>Group A human rotavirus genomics: evidence that gene constellations are influenced by viral protein interactions.</title>
        <authorList>
            <person name="Heiman E.M."/>
            <person name="McDonald S.M."/>
            <person name="Barro M."/>
            <person name="Taraporewala Z.F."/>
            <person name="Bar-Magen T."/>
            <person name="Patton J.T."/>
        </authorList>
    </citation>
    <scope>NUCLEOTIDE SEQUENCE [GENOMIC DNA]</scope>
</reference>
<comment type="function">
    <text evidence="1">Participates in replication and packaging of the viral genome. Plays a crucial role, together with NSP5, in the formation of virus factories (viroplasms), which are large inclusions in the host cytoplasm where replication intermediates are assembled and viral RNA replication takes place. Displays ssRNA binding, NTPase, RNA triphosphatase (RTPase) and ATP-independent helix-unwinding activities. The unwinding activity may prepare and organize plus-strand RNAs for packaging and replication by removing interfering secondary structures. The RTPase activity plays a role in the removal of the gamma-phosphate from the rotavirus RNA minus strands of dsRNA genome segments. Participates in the selective exclusion of host proteins from stress granules (SG) and P bodies (PB). Also participates in the sequestration of these remodeled organelles in viral factories.</text>
</comment>
<comment type="cofactor">
    <cofactor evidence="1">
        <name>Mg(2+)</name>
        <dbReference type="ChEBI" id="CHEBI:18420"/>
    </cofactor>
</comment>
<comment type="subunit">
    <text evidence="1">Homooctamer. Interacts with VP1; this interaction is weak. Interacts with NSP5; this interaction leads to up-regulation of NSP5 phosphorylation and formation of viral factories. Interacts with host DCP1A, DCP1B, DDX6, EDC4 and EIF2S1/eIF2-alpha; these interactions are probably part of the sequestration of some host SGs and PBs proteins in viral factories.</text>
</comment>
<comment type="subcellular location">
    <subcellularLocation>
        <location evidence="1">Host cytoplasm</location>
    </subcellularLocation>
    <text evidence="1">Found in spherical cytoplasmic structures, called viral factories, that appear early after infection and are the site of viral replication and packaging.</text>
</comment>
<comment type="similarity">
    <text evidence="1">Belongs to the rotavirus NSP2 family.</text>
</comment>
<accession>B3SRQ6</accession>
<dbReference type="EC" id="3.6.4.-" evidence="1"/>
<dbReference type="EMBL" id="EF672559">
    <property type="protein sequence ID" value="ABV53231.1"/>
    <property type="molecule type" value="Genomic_DNA"/>
</dbReference>
<dbReference type="SMR" id="B3SRQ6"/>
<dbReference type="Proteomes" id="UP000001455">
    <property type="component" value="Genome"/>
</dbReference>
<dbReference type="GO" id="GO:0030430">
    <property type="term" value="C:host cell cytoplasm"/>
    <property type="evidence" value="ECO:0007669"/>
    <property type="project" value="UniProtKB-SubCell"/>
</dbReference>
<dbReference type="GO" id="GO:0005524">
    <property type="term" value="F:ATP binding"/>
    <property type="evidence" value="ECO:0007669"/>
    <property type="project" value="UniProtKB-KW"/>
</dbReference>
<dbReference type="GO" id="GO:0046872">
    <property type="term" value="F:metal ion binding"/>
    <property type="evidence" value="ECO:0007669"/>
    <property type="project" value="UniProtKB-UniRule"/>
</dbReference>
<dbReference type="GO" id="GO:0004550">
    <property type="term" value="F:nucleoside diphosphate kinase activity"/>
    <property type="evidence" value="ECO:0007669"/>
    <property type="project" value="InterPro"/>
</dbReference>
<dbReference type="GO" id="GO:0017111">
    <property type="term" value="F:ribonucleoside triphosphate phosphatase activity"/>
    <property type="evidence" value="ECO:0007669"/>
    <property type="project" value="InterPro"/>
</dbReference>
<dbReference type="GO" id="GO:0003723">
    <property type="term" value="F:RNA binding"/>
    <property type="evidence" value="ECO:0007669"/>
    <property type="project" value="UniProtKB-UniRule"/>
</dbReference>
<dbReference type="GO" id="GO:0019079">
    <property type="term" value="P:viral genome replication"/>
    <property type="evidence" value="ECO:0007669"/>
    <property type="project" value="UniProtKB-UniRule"/>
</dbReference>
<dbReference type="Gene3D" id="3.30.428.20">
    <property type="entry name" value="Rotavirus NSP2 fragment, C-terminal domain"/>
    <property type="match status" value="1"/>
</dbReference>
<dbReference type="Gene3D" id="3.90.1400.10">
    <property type="entry name" value="Rotavirus NSP2 fragment, N-terminal domain"/>
    <property type="match status" value="1"/>
</dbReference>
<dbReference type="HAMAP" id="MF_04089">
    <property type="entry name" value="ROTA_NSP2"/>
    <property type="match status" value="1"/>
</dbReference>
<dbReference type="InterPro" id="IPR048306">
    <property type="entry name" value="Rota_NS35_C"/>
</dbReference>
<dbReference type="InterPro" id="IPR048573">
    <property type="entry name" value="Rota_NS35_N"/>
</dbReference>
<dbReference type="InterPro" id="IPR003668">
    <property type="entry name" value="Rotavirus_NSP2"/>
</dbReference>
<dbReference type="InterPro" id="IPR024076">
    <property type="entry name" value="Rotavirus_NSP2_C"/>
</dbReference>
<dbReference type="InterPro" id="IPR024068">
    <property type="entry name" value="Rotavirus_NSP2_N"/>
</dbReference>
<dbReference type="Pfam" id="PF02509">
    <property type="entry name" value="Rota_NS35_C"/>
    <property type="match status" value="1"/>
</dbReference>
<dbReference type="Pfam" id="PF21067">
    <property type="entry name" value="Rota_NS35_N"/>
    <property type="match status" value="1"/>
</dbReference>
<dbReference type="SUPFAM" id="SSF75347">
    <property type="entry name" value="Rotavirus NSP2 fragment, C-terminal domain"/>
    <property type="match status" value="1"/>
</dbReference>
<dbReference type="SUPFAM" id="SSF75574">
    <property type="entry name" value="Rotavirus NSP2 fragment, N-terminal domain"/>
    <property type="match status" value="1"/>
</dbReference>
<protein>
    <recommendedName>
        <fullName evidence="1">Non-structural protein 2</fullName>
        <shortName evidence="1">NSP2</shortName>
        <ecNumber evidence="1">3.6.4.-</ecNumber>
    </recommendedName>
    <alternativeName>
        <fullName evidence="1">NCVP3</fullName>
    </alternativeName>
    <alternativeName>
        <fullName evidence="1">Non-structural RNA-binding protein 35</fullName>
        <shortName evidence="1">NS35</shortName>
    </alternativeName>
</protein>